<organism>
    <name type="scientific">Mus musculus</name>
    <name type="common">Mouse</name>
    <dbReference type="NCBI Taxonomy" id="10090"/>
    <lineage>
        <taxon>Eukaryota</taxon>
        <taxon>Metazoa</taxon>
        <taxon>Chordata</taxon>
        <taxon>Craniata</taxon>
        <taxon>Vertebrata</taxon>
        <taxon>Euteleostomi</taxon>
        <taxon>Mammalia</taxon>
        <taxon>Eutheria</taxon>
        <taxon>Euarchontoglires</taxon>
        <taxon>Glires</taxon>
        <taxon>Rodentia</taxon>
        <taxon>Myomorpha</taxon>
        <taxon>Muroidea</taxon>
        <taxon>Muridae</taxon>
        <taxon>Murinae</taxon>
        <taxon>Mus</taxon>
        <taxon>Mus</taxon>
    </lineage>
</organism>
<dbReference type="EMBL" id="AY312281">
    <property type="protein sequence ID" value="AAP76388.1"/>
    <property type="molecule type" value="mRNA"/>
</dbReference>
<dbReference type="EMBL" id="AK173241">
    <property type="protein sequence ID" value="BAD32519.1"/>
    <property type="status" value="ALT_INIT"/>
    <property type="molecule type" value="mRNA"/>
</dbReference>
<dbReference type="EMBL" id="AK136506">
    <property type="protein sequence ID" value="BAE23015.1"/>
    <property type="molecule type" value="mRNA"/>
</dbReference>
<dbReference type="EMBL" id="AL928644">
    <property type="status" value="NOT_ANNOTATED_CDS"/>
    <property type="molecule type" value="Genomic_DNA"/>
</dbReference>
<dbReference type="EMBL" id="BC057961">
    <property type="protein sequence ID" value="AAH57961.2"/>
    <property type="molecule type" value="mRNA"/>
</dbReference>
<dbReference type="EMBL" id="BC060153">
    <property type="status" value="NOT_ANNOTATED_CDS"/>
    <property type="molecule type" value="mRNA"/>
</dbReference>
<dbReference type="CCDS" id="CCDS16137.1"/>
<dbReference type="RefSeq" id="NP_001103679.1">
    <property type="nucleotide sequence ID" value="NM_001110209.1"/>
</dbReference>
<dbReference type="RefSeq" id="NP_081409.1">
    <property type="nucleotide sequence ID" value="NM_027133.4"/>
</dbReference>
<dbReference type="RefSeq" id="XP_006500208.1">
    <property type="nucleotide sequence ID" value="XM_006500145.5"/>
</dbReference>
<dbReference type="RefSeq" id="XP_006500209.1">
    <property type="nucleotide sequence ID" value="XM_006500146.5"/>
</dbReference>
<dbReference type="RefSeq" id="XP_030107916.1">
    <property type="nucleotide sequence ID" value="XM_030252056.1"/>
</dbReference>
<dbReference type="SMR" id="Q7TQ95"/>
<dbReference type="BioGRID" id="213565">
    <property type="interactions" value="96"/>
</dbReference>
<dbReference type="FunCoup" id="Q7TQ95">
    <property type="interactions" value="3178"/>
</dbReference>
<dbReference type="IntAct" id="Q7TQ95">
    <property type="interactions" value="1"/>
</dbReference>
<dbReference type="STRING" id="10090.ENSMUSP00000066891"/>
<dbReference type="GlyGen" id="Q7TQ95">
    <property type="glycosylation" value="3 sites, 1 N-linked glycan (1 site), 1 O-linked glycan (2 sites)"/>
</dbReference>
<dbReference type="iPTMnet" id="Q7TQ95"/>
<dbReference type="PhosphoSitePlus" id="Q7TQ95"/>
<dbReference type="SwissPalm" id="Q7TQ95"/>
<dbReference type="jPOST" id="Q7TQ95"/>
<dbReference type="PaxDb" id="10090-ENSMUSP00000066891"/>
<dbReference type="PeptideAtlas" id="Q7TQ95"/>
<dbReference type="ProteomicsDB" id="290135"/>
<dbReference type="Pumba" id="Q7TQ95"/>
<dbReference type="Antibodypedia" id="3018">
    <property type="antibodies" value="21 antibodies from 9 providers"/>
</dbReference>
<dbReference type="Ensembl" id="ENSMUST00000064503.13">
    <property type="protein sequence ID" value="ENSMUSP00000066891.7"/>
    <property type="gene ID" value="ENSMUSG00000009207.16"/>
</dbReference>
<dbReference type="GeneID" id="69605"/>
<dbReference type="KEGG" id="mmu:69605"/>
<dbReference type="UCSC" id="uc008kdq.2">
    <property type="organism name" value="mouse"/>
</dbReference>
<dbReference type="AGR" id="MGI:1918115"/>
<dbReference type="CTD" id="80856"/>
<dbReference type="MGI" id="MGI:1918115">
    <property type="gene designation" value="Lnpk"/>
</dbReference>
<dbReference type="VEuPathDB" id="HostDB:ENSMUSG00000009207"/>
<dbReference type="eggNOG" id="KOG2846">
    <property type="taxonomic scope" value="Eukaryota"/>
</dbReference>
<dbReference type="GeneTree" id="ENSGT00390000001859"/>
<dbReference type="InParanoid" id="Q7TQ95"/>
<dbReference type="OMA" id="CGYFNPS"/>
<dbReference type="OrthoDB" id="1725934at2759"/>
<dbReference type="PhylomeDB" id="Q7TQ95"/>
<dbReference type="TreeFam" id="TF315086"/>
<dbReference type="BioGRID-ORCS" id="69605">
    <property type="hits" value="0 hits in 74 CRISPR screens"/>
</dbReference>
<dbReference type="CD-CODE" id="CE726F99">
    <property type="entry name" value="Postsynaptic density"/>
</dbReference>
<dbReference type="ChiTaRS" id="Lnpk">
    <property type="organism name" value="mouse"/>
</dbReference>
<dbReference type="PRO" id="PR:Q7TQ95"/>
<dbReference type="Proteomes" id="UP000000589">
    <property type="component" value="Chromosome 2"/>
</dbReference>
<dbReference type="RNAct" id="Q7TQ95">
    <property type="molecule type" value="protein"/>
</dbReference>
<dbReference type="Bgee" id="ENSMUSG00000009207">
    <property type="expression patterns" value="Expressed in manus and 242 other cell types or tissues"/>
</dbReference>
<dbReference type="ExpressionAtlas" id="Q7TQ95">
    <property type="expression patterns" value="baseline and differential"/>
</dbReference>
<dbReference type="GO" id="GO:0005789">
    <property type="term" value="C:endoplasmic reticulum membrane"/>
    <property type="evidence" value="ECO:0000250"/>
    <property type="project" value="UniProtKB"/>
</dbReference>
<dbReference type="GO" id="GO:0098826">
    <property type="term" value="C:endoplasmic reticulum tubular network membrane"/>
    <property type="evidence" value="ECO:0000250"/>
    <property type="project" value="UniProtKB"/>
</dbReference>
<dbReference type="GO" id="GO:0005654">
    <property type="term" value="C:nucleoplasm"/>
    <property type="evidence" value="ECO:0007669"/>
    <property type="project" value="Ensembl"/>
</dbReference>
<dbReference type="GO" id="GO:0042802">
    <property type="term" value="F:identical protein binding"/>
    <property type="evidence" value="ECO:0000250"/>
    <property type="project" value="UniProtKB"/>
</dbReference>
<dbReference type="GO" id="GO:0008270">
    <property type="term" value="F:zinc ion binding"/>
    <property type="evidence" value="ECO:0007669"/>
    <property type="project" value="UniProtKB-KW"/>
</dbReference>
<dbReference type="GO" id="GO:0007596">
    <property type="term" value="P:blood coagulation"/>
    <property type="evidence" value="ECO:0000315"/>
    <property type="project" value="MGI"/>
</dbReference>
<dbReference type="GO" id="GO:0042733">
    <property type="term" value="P:embryonic digit morphogenesis"/>
    <property type="evidence" value="ECO:0000316"/>
    <property type="project" value="MGI"/>
</dbReference>
<dbReference type="GO" id="GO:0035115">
    <property type="term" value="P:embryonic forelimb morphogenesis"/>
    <property type="evidence" value="ECO:0000315"/>
    <property type="project" value="MGI"/>
</dbReference>
<dbReference type="GO" id="GO:0071788">
    <property type="term" value="P:endoplasmic reticulum tubular network maintenance"/>
    <property type="evidence" value="ECO:0000250"/>
    <property type="project" value="UniProtKB"/>
</dbReference>
<dbReference type="GO" id="GO:1903373">
    <property type="term" value="P:positive regulation of endoplasmic reticulum tubular network organization"/>
    <property type="evidence" value="ECO:0000250"/>
    <property type="project" value="UniProtKB"/>
</dbReference>
<dbReference type="GO" id="GO:0032330">
    <property type="term" value="P:regulation of chondrocyte differentiation"/>
    <property type="evidence" value="ECO:0000315"/>
    <property type="project" value="MGI"/>
</dbReference>
<dbReference type="InterPro" id="IPR040115">
    <property type="entry name" value="Lnp"/>
</dbReference>
<dbReference type="InterPro" id="IPR019273">
    <property type="entry name" value="Lunapark_Znf"/>
</dbReference>
<dbReference type="PANTHER" id="PTHR22166">
    <property type="entry name" value="ENDOPLASMIC RETICULUM JUNCTION FORMATION PROTEIN LUNAPARK"/>
    <property type="match status" value="1"/>
</dbReference>
<dbReference type="PANTHER" id="PTHR22166:SF12">
    <property type="entry name" value="ENDOPLASMIC RETICULUM JUNCTION FORMATION PROTEIN LUNAPARK"/>
    <property type="match status" value="1"/>
</dbReference>
<dbReference type="Pfam" id="PF10058">
    <property type="entry name" value="Zn_ribbon_10"/>
    <property type="match status" value="1"/>
</dbReference>
<sequence length="425" mass="47500">MGGLFSRWRAKPSTVEVLENIDKEIQALEEFREKNQRLQKLWVGRLIIYSSILYLFTCLIVYLWYLPDEFTARLVMTLPFFAFPLIIWTLRTVLIFFFSKRTERNNEALDDLKSQKKKILEEVMEKETYKTAKLILERFDPDSKKAKEFEPPSAGAAVTAKPGQEIRQRTAAQRNLSPAPASSSQGPPPQGPVSPGPAKDASAPGGPPERTVAPALPRRLGSPATSVPGMGLHPPGPPLARPILPRERGALDRIVEYLVGDGPQNRYALICQQCFSHNGMALKEEFEYIAFRCAYCFFLNPARKTRPQAPRLPEFSFEKRQAVEGSSSTGPTLLESVPSAESQLIEDSLEEQDVLDNSTEQRDDKIPVTEQTSQVIEKTSGPEEPAENQEETENEETSTNEAKSPVLRADSVPNLEPSEESLVTK</sequence>
<proteinExistence type="evidence at protein level"/>
<keyword id="KW-0175">Coiled coil</keyword>
<keyword id="KW-0217">Developmental protein</keyword>
<keyword id="KW-0256">Endoplasmic reticulum</keyword>
<keyword id="KW-0449">Lipoprotein</keyword>
<keyword id="KW-0472">Membrane</keyword>
<keyword id="KW-0479">Metal-binding</keyword>
<keyword id="KW-0519">Myristate</keyword>
<keyword id="KW-0597">Phosphoprotein</keyword>
<keyword id="KW-1185">Reference proteome</keyword>
<keyword id="KW-0812">Transmembrane</keyword>
<keyword id="KW-1133">Transmembrane helix</keyword>
<keyword id="KW-0862">Zinc</keyword>
<keyword id="KW-0863">Zinc-finger</keyword>
<accession>Q7TQ95</accession>
<accession>A2ASL9</accession>
<accession>Q69ZC5</accession>
<accession>Q6PAQ1</accession>
<accession>Q6PEN8</accession>
<comment type="function">
    <text evidence="1 4">Endoplasmic reticulum (ER)-shaping membrane protein that plays a role in determining ER morphology. Involved in the stabilization of nascent three-way ER tubular junctions within the ER network. May also play a role as a curvature-stabilizing protein within three-way ER tubular junction network. May be involved in limb and central nervous system development (PubMed:12732147).</text>
</comment>
<comment type="subunit">
    <text evidence="1">Homodimer; homodimerization requires the C4-type zinc finger motif and decreases during mitosis in a phosphorylation-dependent manner.</text>
</comment>
<comment type="subcellular location">
    <subcellularLocation>
        <location evidence="1">Endoplasmic reticulum membrane</location>
        <topology evidence="1">Multi-pass membrane protein</topology>
        <orientation evidence="1">Cytoplasmic side</orientation>
    </subcellularLocation>
    <text evidence="1">Localizes at endoplasmic reticulum (ER) three-way tubular junctions, which represent crossing-points at which the tubules build a polygonal network.</text>
</comment>
<comment type="tissue specificity">
    <text evidence="4">Expressed in most tissues at basal level, with reinforcement in distal limb buds, genital bud, and in parts of the central nervous system.</text>
</comment>
<comment type="developmental stage">
    <text evidence="4">Strongly expressed in both limb and genital buds as is the case for Evx2 and Hoxd genes, in particular Hoxd13. In developing limb buds, it is first seen in 10.5 days old fetuses, in the posterior distal bud, to subsequently extend throughout the distal aspect, in presumptive digits.</text>
</comment>
<comment type="domain">
    <text evidence="1">The transmembrane domain 1 and 2 function as a signal-anchor and stop-transfer sequence, respectively, generating a double-spanning integral membrane protein with a N- and C-terminal cytoplasmic orientation. Transmembrane domain 1 and 2 are probably sufficient to mediate membrane translocation and topology formation in a N-myristoylation-independent manner. Transmembrane domain 2 is sufficient to block the protein secretion pathway. The two coiled-coil domains are necessary for its endoplasmic reticulum (ER) three-way tubular junction localization. The C4-type zinc finger motif is necessary both for its ER three-way tubular junction localization and formation.</text>
</comment>
<comment type="PTM">
    <text evidence="1">Myristoylated; myristoylation is necessary for the endoplasmic reticulum (ER) three-way ER tubular junction formation, but is not required neither for membrane translocation, membrane topology formation, nor for the specific localization to ER membranes.</text>
</comment>
<comment type="PTM">
    <text evidence="1">Phosphorylated. Phosphorylation occurs at Ser-177, Ser-182, Ser-222, Ser-316 and Ser-380 during interphase. Phosphorylation occurs at Ser-114, Ser-153, Ser-194, Thr-211 and Ser-348 during mitosis; these phosphorylations reduce both its homodimerization and the ER three-way tubular junction formation.</text>
</comment>
<comment type="PTM">
    <text evidence="1">Subject to proteasomal degradation following phosphorylation during mitosis.</text>
</comment>
<comment type="miscellaneous">
    <text>Was named 'Lunapark' because the protein sequence contains the word 'LNPARK'.</text>
</comment>
<comment type="similarity">
    <text evidence="5">Belongs to the lunapark family.</text>
</comment>
<comment type="sequence caution" evidence="5">
    <conflict type="erroneous initiation">
        <sequence resource="EMBL-CDS" id="BAD32519"/>
    </conflict>
</comment>
<comment type="sequence caution" evidence="5">
    <conflict type="frameshift">
        <sequence resource="EMBL" id="BC060153"/>
    </conflict>
</comment>
<reference key="1">
    <citation type="journal article" date="2003" name="Cell">
        <title>A global control region defines a chromosomal regulatory landscape containing the HoxD cluster.</title>
        <authorList>
            <person name="Spitz F."/>
            <person name="Gonzalez F."/>
            <person name="Duboule D."/>
        </authorList>
    </citation>
    <scope>NUCLEOTIDE SEQUENCE [MRNA]</scope>
    <scope>TISSUE SPECIFICITY</scope>
    <scope>DEVELOPMENTAL STAGE</scope>
    <source>
        <strain>C57BL/6J</strain>
    </source>
</reference>
<reference key="2">
    <citation type="journal article" date="2004" name="DNA Res.">
        <title>Prediction of the coding sequences of mouse homologues of KIAA gene: IV. The complete nucleotide sequences of 500 mouse KIAA-homologous cDNAs identified by screening of terminal sequences of cDNA clones randomly sampled from size-fractionated libraries.</title>
        <authorList>
            <person name="Okazaki N."/>
            <person name="Kikuno R."/>
            <person name="Ohara R."/>
            <person name="Inamoto S."/>
            <person name="Koseki H."/>
            <person name="Hiraoka S."/>
            <person name="Saga Y."/>
            <person name="Seino S."/>
            <person name="Nishimura M."/>
            <person name="Kaisho T."/>
            <person name="Hoshino K."/>
            <person name="Kitamura H."/>
            <person name="Nagase T."/>
            <person name="Ohara O."/>
            <person name="Koga H."/>
        </authorList>
    </citation>
    <scope>NUCLEOTIDE SEQUENCE [LARGE SCALE MRNA]</scope>
    <source>
        <tissue>Embryonic tail</tissue>
    </source>
</reference>
<reference key="3">
    <citation type="journal article" date="2005" name="Science">
        <title>The transcriptional landscape of the mammalian genome.</title>
        <authorList>
            <person name="Carninci P."/>
            <person name="Kasukawa T."/>
            <person name="Katayama S."/>
            <person name="Gough J."/>
            <person name="Frith M.C."/>
            <person name="Maeda N."/>
            <person name="Oyama R."/>
            <person name="Ravasi T."/>
            <person name="Lenhard B."/>
            <person name="Wells C."/>
            <person name="Kodzius R."/>
            <person name="Shimokawa K."/>
            <person name="Bajic V.B."/>
            <person name="Brenner S.E."/>
            <person name="Batalov S."/>
            <person name="Forrest A.R."/>
            <person name="Zavolan M."/>
            <person name="Davis M.J."/>
            <person name="Wilming L.G."/>
            <person name="Aidinis V."/>
            <person name="Allen J.E."/>
            <person name="Ambesi-Impiombato A."/>
            <person name="Apweiler R."/>
            <person name="Aturaliya R.N."/>
            <person name="Bailey T.L."/>
            <person name="Bansal M."/>
            <person name="Baxter L."/>
            <person name="Beisel K.W."/>
            <person name="Bersano T."/>
            <person name="Bono H."/>
            <person name="Chalk A.M."/>
            <person name="Chiu K.P."/>
            <person name="Choudhary V."/>
            <person name="Christoffels A."/>
            <person name="Clutterbuck D.R."/>
            <person name="Crowe M.L."/>
            <person name="Dalla E."/>
            <person name="Dalrymple B.P."/>
            <person name="de Bono B."/>
            <person name="Della Gatta G."/>
            <person name="di Bernardo D."/>
            <person name="Down T."/>
            <person name="Engstrom P."/>
            <person name="Fagiolini M."/>
            <person name="Faulkner G."/>
            <person name="Fletcher C.F."/>
            <person name="Fukushima T."/>
            <person name="Furuno M."/>
            <person name="Futaki S."/>
            <person name="Gariboldi M."/>
            <person name="Georgii-Hemming P."/>
            <person name="Gingeras T.R."/>
            <person name="Gojobori T."/>
            <person name="Green R.E."/>
            <person name="Gustincich S."/>
            <person name="Harbers M."/>
            <person name="Hayashi Y."/>
            <person name="Hensch T.K."/>
            <person name="Hirokawa N."/>
            <person name="Hill D."/>
            <person name="Huminiecki L."/>
            <person name="Iacono M."/>
            <person name="Ikeo K."/>
            <person name="Iwama A."/>
            <person name="Ishikawa T."/>
            <person name="Jakt M."/>
            <person name="Kanapin A."/>
            <person name="Katoh M."/>
            <person name="Kawasawa Y."/>
            <person name="Kelso J."/>
            <person name="Kitamura H."/>
            <person name="Kitano H."/>
            <person name="Kollias G."/>
            <person name="Krishnan S.P."/>
            <person name="Kruger A."/>
            <person name="Kummerfeld S.K."/>
            <person name="Kurochkin I.V."/>
            <person name="Lareau L.F."/>
            <person name="Lazarevic D."/>
            <person name="Lipovich L."/>
            <person name="Liu J."/>
            <person name="Liuni S."/>
            <person name="McWilliam S."/>
            <person name="Madan Babu M."/>
            <person name="Madera M."/>
            <person name="Marchionni L."/>
            <person name="Matsuda H."/>
            <person name="Matsuzawa S."/>
            <person name="Miki H."/>
            <person name="Mignone F."/>
            <person name="Miyake S."/>
            <person name="Morris K."/>
            <person name="Mottagui-Tabar S."/>
            <person name="Mulder N."/>
            <person name="Nakano N."/>
            <person name="Nakauchi H."/>
            <person name="Ng P."/>
            <person name="Nilsson R."/>
            <person name="Nishiguchi S."/>
            <person name="Nishikawa S."/>
            <person name="Nori F."/>
            <person name="Ohara O."/>
            <person name="Okazaki Y."/>
            <person name="Orlando V."/>
            <person name="Pang K.C."/>
            <person name="Pavan W.J."/>
            <person name="Pavesi G."/>
            <person name="Pesole G."/>
            <person name="Petrovsky N."/>
            <person name="Piazza S."/>
            <person name="Reed J."/>
            <person name="Reid J.F."/>
            <person name="Ring B.Z."/>
            <person name="Ringwald M."/>
            <person name="Rost B."/>
            <person name="Ruan Y."/>
            <person name="Salzberg S.L."/>
            <person name="Sandelin A."/>
            <person name="Schneider C."/>
            <person name="Schoenbach C."/>
            <person name="Sekiguchi K."/>
            <person name="Semple C.A."/>
            <person name="Seno S."/>
            <person name="Sessa L."/>
            <person name="Sheng Y."/>
            <person name="Shibata Y."/>
            <person name="Shimada H."/>
            <person name="Shimada K."/>
            <person name="Silva D."/>
            <person name="Sinclair B."/>
            <person name="Sperling S."/>
            <person name="Stupka E."/>
            <person name="Sugiura K."/>
            <person name="Sultana R."/>
            <person name="Takenaka Y."/>
            <person name="Taki K."/>
            <person name="Tammoja K."/>
            <person name="Tan S.L."/>
            <person name="Tang S."/>
            <person name="Taylor M.S."/>
            <person name="Tegner J."/>
            <person name="Teichmann S.A."/>
            <person name="Ueda H.R."/>
            <person name="van Nimwegen E."/>
            <person name="Verardo R."/>
            <person name="Wei C.L."/>
            <person name="Yagi K."/>
            <person name="Yamanishi H."/>
            <person name="Zabarovsky E."/>
            <person name="Zhu S."/>
            <person name="Zimmer A."/>
            <person name="Hide W."/>
            <person name="Bult C."/>
            <person name="Grimmond S.M."/>
            <person name="Teasdale R.D."/>
            <person name="Liu E.T."/>
            <person name="Brusic V."/>
            <person name="Quackenbush J."/>
            <person name="Wahlestedt C."/>
            <person name="Mattick J.S."/>
            <person name="Hume D.A."/>
            <person name="Kai C."/>
            <person name="Sasaki D."/>
            <person name="Tomaru Y."/>
            <person name="Fukuda S."/>
            <person name="Kanamori-Katayama M."/>
            <person name="Suzuki M."/>
            <person name="Aoki J."/>
            <person name="Arakawa T."/>
            <person name="Iida J."/>
            <person name="Imamura K."/>
            <person name="Itoh M."/>
            <person name="Kato T."/>
            <person name="Kawaji H."/>
            <person name="Kawagashira N."/>
            <person name="Kawashima T."/>
            <person name="Kojima M."/>
            <person name="Kondo S."/>
            <person name="Konno H."/>
            <person name="Nakano K."/>
            <person name="Ninomiya N."/>
            <person name="Nishio T."/>
            <person name="Okada M."/>
            <person name="Plessy C."/>
            <person name="Shibata K."/>
            <person name="Shiraki T."/>
            <person name="Suzuki S."/>
            <person name="Tagami M."/>
            <person name="Waki K."/>
            <person name="Watahiki A."/>
            <person name="Okamura-Oho Y."/>
            <person name="Suzuki H."/>
            <person name="Kawai J."/>
            <person name="Hayashizaki Y."/>
        </authorList>
    </citation>
    <scope>NUCLEOTIDE SEQUENCE [LARGE SCALE MRNA]</scope>
    <source>
        <strain>C57BL/6J</strain>
        <tissue>Cecum</tissue>
    </source>
</reference>
<reference key="4">
    <citation type="journal article" date="2009" name="PLoS Biol.">
        <title>Lineage-specific biology revealed by a finished genome assembly of the mouse.</title>
        <authorList>
            <person name="Church D.M."/>
            <person name="Goodstadt L."/>
            <person name="Hillier L.W."/>
            <person name="Zody M.C."/>
            <person name="Goldstein S."/>
            <person name="She X."/>
            <person name="Bult C.J."/>
            <person name="Agarwala R."/>
            <person name="Cherry J.L."/>
            <person name="DiCuccio M."/>
            <person name="Hlavina W."/>
            <person name="Kapustin Y."/>
            <person name="Meric P."/>
            <person name="Maglott D."/>
            <person name="Birtle Z."/>
            <person name="Marques A.C."/>
            <person name="Graves T."/>
            <person name="Zhou S."/>
            <person name="Teague B."/>
            <person name="Potamousis K."/>
            <person name="Churas C."/>
            <person name="Place M."/>
            <person name="Herschleb J."/>
            <person name="Runnheim R."/>
            <person name="Forrest D."/>
            <person name="Amos-Landgraf J."/>
            <person name="Schwartz D.C."/>
            <person name="Cheng Z."/>
            <person name="Lindblad-Toh K."/>
            <person name="Eichler E.E."/>
            <person name="Ponting C.P."/>
        </authorList>
    </citation>
    <scope>NUCLEOTIDE SEQUENCE [LARGE SCALE GENOMIC DNA]</scope>
    <source>
        <strain>C57BL/6J</strain>
    </source>
</reference>
<reference key="5">
    <citation type="journal article" date="2004" name="Genome Res.">
        <title>The status, quality, and expansion of the NIH full-length cDNA project: the Mammalian Gene Collection (MGC).</title>
        <authorList>
            <consortium name="The MGC Project Team"/>
        </authorList>
    </citation>
    <scope>NUCLEOTIDE SEQUENCE [LARGE SCALE MRNA]</scope>
    <source>
        <strain>C57BL/6J</strain>
        <strain>FVB/N</strain>
        <tissue>Brain</tissue>
        <tissue>Mammary tumor</tissue>
    </source>
</reference>
<reference key="6">
    <citation type="journal article" date="2004" name="Mol. Cell. Proteomics">
        <title>Phosphoproteomic analysis of the developing mouse brain.</title>
        <authorList>
            <person name="Ballif B.A."/>
            <person name="Villen J."/>
            <person name="Beausoleil S.A."/>
            <person name="Schwartz D."/>
            <person name="Gygi S.P."/>
        </authorList>
    </citation>
    <scope>PHOSPHORYLATION [LARGE SCALE ANALYSIS] AT SER-411</scope>
    <scope>IDENTIFICATION BY MASS SPECTROMETRY [LARGE SCALE ANALYSIS]</scope>
    <source>
        <tissue>Embryonic brain</tissue>
    </source>
</reference>
<reference key="7">
    <citation type="journal article" date="2009" name="Mol. Cell. Proteomics">
        <title>Large scale localization of protein phosphorylation by use of electron capture dissociation mass spectrometry.</title>
        <authorList>
            <person name="Sweet S.M."/>
            <person name="Bailey C.M."/>
            <person name="Cunningham D.L."/>
            <person name="Heath J.K."/>
            <person name="Cooper H.J."/>
        </authorList>
    </citation>
    <scope>IDENTIFICATION BY MASS SPECTROMETRY [LARGE SCALE ANALYSIS]</scope>
    <source>
        <tissue>Embryonic fibroblast</tissue>
    </source>
</reference>
<reference key="8">
    <citation type="journal article" date="2010" name="Cell">
        <title>A tissue-specific atlas of mouse protein phosphorylation and expression.</title>
        <authorList>
            <person name="Huttlin E.L."/>
            <person name="Jedrychowski M.P."/>
            <person name="Elias J.E."/>
            <person name="Goswami T."/>
            <person name="Rad R."/>
            <person name="Beausoleil S.A."/>
            <person name="Villen J."/>
            <person name="Haas W."/>
            <person name="Sowa M.E."/>
            <person name="Gygi S.P."/>
        </authorList>
    </citation>
    <scope>PHOSPHORYLATION [LARGE SCALE ANALYSIS] AT SER-177 AND SER-411</scope>
    <scope>IDENTIFICATION BY MASS SPECTROMETRY [LARGE SCALE ANALYSIS]</scope>
    <source>
        <tissue>Brain</tissue>
        <tissue>Brown adipose tissue</tissue>
        <tissue>Heart</tissue>
        <tissue>Liver</tissue>
        <tissue>Lung</tissue>
        <tissue>Pancreas</tissue>
        <tissue>Spleen</tissue>
        <tissue>Testis</tissue>
    </source>
</reference>
<name>LNP_MOUSE</name>
<protein>
    <recommendedName>
        <fullName evidence="5">Endoplasmic reticulum junction formation protein lunapark</fullName>
    </recommendedName>
    <alternativeName>
        <fullName evidence="1">ER junction formation factor lunapark</fullName>
    </alternativeName>
    <alternativeName>
        <fullName>Protein ulnaless</fullName>
    </alternativeName>
</protein>
<gene>
    <name evidence="6" type="primary">Lnpk</name>
    <name type="synonym">Kiaa1715</name>
    <name type="synonym">Lnp</name>
    <name type="synonym">Uln</name>
</gene>
<evidence type="ECO:0000250" key="1">
    <source>
        <dbReference type="UniProtKB" id="Q9C0E8"/>
    </source>
</evidence>
<evidence type="ECO:0000255" key="2"/>
<evidence type="ECO:0000256" key="3">
    <source>
        <dbReference type="SAM" id="MobiDB-lite"/>
    </source>
</evidence>
<evidence type="ECO:0000269" key="4">
    <source>
    </source>
</evidence>
<evidence type="ECO:0000305" key="5"/>
<evidence type="ECO:0000312" key="6">
    <source>
        <dbReference type="MGI" id="MGI:1918115"/>
    </source>
</evidence>
<evidence type="ECO:0007744" key="7">
    <source>
    </source>
</evidence>
<evidence type="ECO:0007744" key="8">
    <source>
    </source>
</evidence>
<feature type="initiator methionine" description="Removed" evidence="1">
    <location>
        <position position="1"/>
    </location>
</feature>
<feature type="chain" id="PRO_0000248311" description="Endoplasmic reticulum junction formation protein lunapark">
    <location>
        <begin position="2"/>
        <end position="425"/>
    </location>
</feature>
<feature type="topological domain" description="Cytoplasmic" evidence="1">
    <location>
        <begin position="2"/>
        <end position="45"/>
    </location>
</feature>
<feature type="transmembrane region" description="Helical" evidence="2">
    <location>
        <begin position="46"/>
        <end position="66"/>
    </location>
</feature>
<feature type="topological domain" description="Lumenal" evidence="1">
    <location>
        <begin position="67"/>
        <end position="77"/>
    </location>
</feature>
<feature type="transmembrane region" description="Helical" evidence="2">
    <location>
        <begin position="78"/>
        <end position="98"/>
    </location>
</feature>
<feature type="topological domain" description="Cytoplasmic" evidence="1">
    <location>
        <begin position="99"/>
        <end position="425"/>
    </location>
</feature>
<feature type="zinc finger region" description="C4-type; plays a role in ER morphology" evidence="1">
    <location>
        <begin position="271"/>
        <end position="296"/>
    </location>
</feature>
<feature type="region of interest" description="Disordered" evidence="3">
    <location>
        <begin position="144"/>
        <end position="242"/>
    </location>
</feature>
<feature type="region of interest" description="Disordered" evidence="3">
    <location>
        <begin position="320"/>
        <end position="425"/>
    </location>
</feature>
<feature type="coiled-coil region" evidence="2">
    <location>
        <begin position="15"/>
        <end position="41"/>
    </location>
</feature>
<feature type="coiled-coil region" evidence="2">
    <location>
        <begin position="101"/>
        <end position="128"/>
    </location>
</feature>
<feature type="compositionally biased region" description="Pro residues" evidence="3">
    <location>
        <begin position="186"/>
        <end position="195"/>
    </location>
</feature>
<feature type="compositionally biased region" description="Acidic residues" evidence="3">
    <location>
        <begin position="384"/>
        <end position="398"/>
    </location>
</feature>
<feature type="modified residue" description="Phosphoserine" evidence="1">
    <location>
        <position position="114"/>
    </location>
</feature>
<feature type="modified residue" description="Phosphoserine" evidence="1">
    <location>
        <position position="153"/>
    </location>
</feature>
<feature type="modified residue" description="Phosphoserine" evidence="8">
    <location>
        <position position="177"/>
    </location>
</feature>
<feature type="modified residue" description="Phosphoserine" evidence="1">
    <location>
        <position position="182"/>
    </location>
</feature>
<feature type="modified residue" description="Phosphoserine" evidence="1">
    <location>
        <position position="194"/>
    </location>
</feature>
<feature type="modified residue" description="Phosphothreonine" evidence="1">
    <location>
        <position position="211"/>
    </location>
</feature>
<feature type="modified residue" description="Phosphoserine" evidence="1">
    <location>
        <position position="222"/>
    </location>
</feature>
<feature type="modified residue" description="Phosphoserine" evidence="1">
    <location>
        <position position="316"/>
    </location>
</feature>
<feature type="modified residue" description="Phosphoserine" evidence="1">
    <location>
        <position position="348"/>
    </location>
</feature>
<feature type="modified residue" description="Phosphoserine" evidence="1">
    <location>
        <position position="380"/>
    </location>
</feature>
<feature type="modified residue" description="Phosphoserine" evidence="7 8">
    <location>
        <position position="411"/>
    </location>
</feature>
<feature type="lipid moiety-binding region" description="N-myristoyl glycine" evidence="1">
    <location>
        <position position="2"/>
    </location>
</feature>